<name>RBL1A_ACIFR</name>
<dbReference type="EC" id="4.1.1.39" evidence="1"/>
<dbReference type="EMBL" id="D90113">
    <property type="protein sequence ID" value="BAA14141.1"/>
    <property type="molecule type" value="Genomic_DNA"/>
</dbReference>
<dbReference type="EMBL" id="D11141">
    <property type="protein sequence ID" value="BAA01916.1"/>
    <property type="molecule type" value="Genomic_DNA"/>
</dbReference>
<dbReference type="PIR" id="A41323">
    <property type="entry name" value="RKBCLT"/>
</dbReference>
<dbReference type="SMR" id="P0C916"/>
<dbReference type="GO" id="GO:0000287">
    <property type="term" value="F:magnesium ion binding"/>
    <property type="evidence" value="ECO:0007669"/>
    <property type="project" value="UniProtKB-UniRule"/>
</dbReference>
<dbReference type="GO" id="GO:0004497">
    <property type="term" value="F:monooxygenase activity"/>
    <property type="evidence" value="ECO:0007669"/>
    <property type="project" value="UniProtKB-KW"/>
</dbReference>
<dbReference type="GO" id="GO:0016984">
    <property type="term" value="F:ribulose-bisphosphate carboxylase activity"/>
    <property type="evidence" value="ECO:0007669"/>
    <property type="project" value="UniProtKB-UniRule"/>
</dbReference>
<dbReference type="GO" id="GO:0019253">
    <property type="term" value="P:reductive pentose-phosphate cycle"/>
    <property type="evidence" value="ECO:0007669"/>
    <property type="project" value="UniProtKB-UniRule"/>
</dbReference>
<dbReference type="Gene3D" id="3.20.20.110">
    <property type="entry name" value="Ribulose bisphosphate carboxylase, large subunit, C-terminal domain"/>
    <property type="match status" value="1"/>
</dbReference>
<dbReference type="Gene3D" id="3.30.70.150">
    <property type="entry name" value="RuBisCO large subunit, N-terminal domain"/>
    <property type="match status" value="1"/>
</dbReference>
<dbReference type="HAMAP" id="MF_01338">
    <property type="entry name" value="RuBisCO_L_type1"/>
    <property type="match status" value="1"/>
</dbReference>
<dbReference type="InterPro" id="IPR033966">
    <property type="entry name" value="RuBisCO"/>
</dbReference>
<dbReference type="InterPro" id="IPR020878">
    <property type="entry name" value="RuBisCo_large_chain_AS"/>
</dbReference>
<dbReference type="InterPro" id="IPR000685">
    <property type="entry name" value="RuBisCO_lsu_C"/>
</dbReference>
<dbReference type="InterPro" id="IPR036376">
    <property type="entry name" value="RuBisCO_lsu_C_sf"/>
</dbReference>
<dbReference type="InterPro" id="IPR017443">
    <property type="entry name" value="RuBisCO_lsu_fd_N"/>
</dbReference>
<dbReference type="InterPro" id="IPR036422">
    <property type="entry name" value="RuBisCO_lsu_N_sf"/>
</dbReference>
<dbReference type="InterPro" id="IPR020888">
    <property type="entry name" value="RuBisCO_lsuI"/>
</dbReference>
<dbReference type="NCBIfam" id="NF003252">
    <property type="entry name" value="PRK04208.1"/>
    <property type="match status" value="1"/>
</dbReference>
<dbReference type="PANTHER" id="PTHR42704">
    <property type="entry name" value="RIBULOSE BISPHOSPHATE CARBOXYLASE"/>
    <property type="match status" value="1"/>
</dbReference>
<dbReference type="PANTHER" id="PTHR42704:SF17">
    <property type="entry name" value="RIBULOSE BISPHOSPHATE CARBOXYLASE LARGE CHAIN"/>
    <property type="match status" value="1"/>
</dbReference>
<dbReference type="Pfam" id="PF00016">
    <property type="entry name" value="RuBisCO_large"/>
    <property type="match status" value="1"/>
</dbReference>
<dbReference type="Pfam" id="PF02788">
    <property type="entry name" value="RuBisCO_large_N"/>
    <property type="match status" value="1"/>
</dbReference>
<dbReference type="SFLD" id="SFLDG01052">
    <property type="entry name" value="RuBisCO"/>
    <property type="match status" value="1"/>
</dbReference>
<dbReference type="SFLD" id="SFLDS00014">
    <property type="entry name" value="RuBisCO"/>
    <property type="match status" value="1"/>
</dbReference>
<dbReference type="SFLD" id="SFLDG00301">
    <property type="entry name" value="RuBisCO-like_proteins"/>
    <property type="match status" value="1"/>
</dbReference>
<dbReference type="SUPFAM" id="SSF51649">
    <property type="entry name" value="RuBisCo, C-terminal domain"/>
    <property type="match status" value="1"/>
</dbReference>
<dbReference type="SUPFAM" id="SSF54966">
    <property type="entry name" value="RuBisCO, large subunit, small (N-terminal) domain"/>
    <property type="match status" value="1"/>
</dbReference>
<dbReference type="PROSITE" id="PS00157">
    <property type="entry name" value="RUBISCO_LARGE"/>
    <property type="match status" value="1"/>
</dbReference>
<reference key="1">
    <citation type="journal article" date="1991" name="J. Bacteriol.">
        <title>Evidence for two sets of structural genes coding for ribulose bisphosphate carboxylase in Thiobacillus ferrooxidans.</title>
        <authorList>
            <person name="Kusano T."/>
            <person name="Takeshima T."/>
            <person name="Inoue C."/>
            <person name="Sugawara K."/>
        </authorList>
    </citation>
    <scope>NUCLEOTIDE SEQUENCE [GENOMIC DNA]</scope>
    <source>
        <strain>Fe1</strain>
    </source>
</reference>
<reference key="2">
    <citation type="journal article" date="1993" name="J. Bacteriol.">
        <title>Specific binding of Thiobacillus ferrooxidans RbcR to the intergenic sequence between the rbc operon and the rbcR gene.</title>
        <authorList>
            <person name="Kusano T."/>
            <person name="Sugawara K."/>
        </authorList>
    </citation>
    <scope>NUCLEOTIDE SEQUENCE [GENOMIC DNA] OF 1-23</scope>
    <source>
        <strain>Fe1</strain>
    </source>
</reference>
<comment type="function">
    <text evidence="1">RuBisCO catalyzes two reactions: the carboxylation of D-ribulose 1,5-bisphosphate, the primary event in carbon dioxide fixation, as well as the oxidative fragmentation of the pentose substrate. Both reactions occur simultaneously and in competition at the same active site.</text>
</comment>
<comment type="catalytic activity">
    <reaction evidence="1">
        <text>2 (2R)-3-phosphoglycerate + 2 H(+) = D-ribulose 1,5-bisphosphate + CO2 + H2O</text>
        <dbReference type="Rhea" id="RHEA:23124"/>
        <dbReference type="ChEBI" id="CHEBI:15377"/>
        <dbReference type="ChEBI" id="CHEBI:15378"/>
        <dbReference type="ChEBI" id="CHEBI:16526"/>
        <dbReference type="ChEBI" id="CHEBI:57870"/>
        <dbReference type="ChEBI" id="CHEBI:58272"/>
        <dbReference type="EC" id="4.1.1.39"/>
    </reaction>
</comment>
<comment type="catalytic activity">
    <reaction evidence="1">
        <text>D-ribulose 1,5-bisphosphate + O2 = 2-phosphoglycolate + (2R)-3-phosphoglycerate + 2 H(+)</text>
        <dbReference type="Rhea" id="RHEA:36631"/>
        <dbReference type="ChEBI" id="CHEBI:15378"/>
        <dbReference type="ChEBI" id="CHEBI:15379"/>
        <dbReference type="ChEBI" id="CHEBI:57870"/>
        <dbReference type="ChEBI" id="CHEBI:58033"/>
        <dbReference type="ChEBI" id="CHEBI:58272"/>
    </reaction>
</comment>
<comment type="cofactor">
    <cofactor evidence="1">
        <name>Mg(2+)</name>
        <dbReference type="ChEBI" id="CHEBI:18420"/>
    </cofactor>
    <text evidence="1">Binds 1 Mg(2+) ion per subunit.</text>
</comment>
<comment type="subunit">
    <text evidence="1">Heterohexadecamer of 8 large chains and 8 small chains.</text>
</comment>
<comment type="miscellaneous">
    <text evidence="1">The basic functional RuBisCO is composed of a large chain homodimer in a 'head-to-tail' conformation. In form I RuBisCO this homodimer is arranged in a barrel-like tetramer with the small subunits forming a tetrameric 'cap' on each end of the 'barrel'.</text>
</comment>
<comment type="similarity">
    <text evidence="1">Belongs to the RuBisCO large chain family. Type I subfamily.</text>
</comment>
<comment type="caution">
    <text evidence="2">In T.ferrooxidans two similar set of genes code for RuBisCO large and small chains: the rbcL1-rbcS1 and the rbcL2-rbcS2 sets.</text>
</comment>
<sequence length="473" mass="52501">MAVKTYEAGVKDYRQTYWAPEYVPLDSDILACFKITPQPGVDREEAAAAVAAESSTGTWTTVWTDLLTDMDYYKGRAYRIEDVPGDDTCFYAFVAYPIDLFEEGSVVNVFTSLVGNVFGFKAVRALRLEDVRFPLAYVKTCNGPPHGIQVERDKMNKYGRPMLGCTIKPKLGLSAKNYGRAVYECLRGGLDFTKDDENVNSQPFIAWRDRFLFVADAIHTAEAETGERKGHYLNVTAPSPEEMYERAEFAKELNMPIIMHDFLTGGFCANTGLARWCRKNGVLLHIHRAMHAVVDRNPHHGIHFRVLAKALRLSGGDHLHTGTVVGKLEGDRAATQGWVDLLRESFVPEDAGRGIFFDQDWGSMPGVFAVASGGIHVWHMPALLAIFGDDAIFQFGGGTLGHPWGNAAGAAANRVALEACVEARNEGRDLEREGKDILTNAAKDSPELKIALETWKEIKFEFDTVDKLDVVNR</sequence>
<accession>P0C916</accession>
<accession>P28895</accession>
<accession>Q9X5Z0</accession>
<organism>
    <name type="scientific">Acidithiobacillus ferrooxidans</name>
    <name type="common">Thiobacillus ferrooxidans</name>
    <dbReference type="NCBI Taxonomy" id="920"/>
    <lineage>
        <taxon>Bacteria</taxon>
        <taxon>Pseudomonadati</taxon>
        <taxon>Pseudomonadota</taxon>
        <taxon>Acidithiobacillia</taxon>
        <taxon>Acidithiobacillales</taxon>
        <taxon>Acidithiobacillaceae</taxon>
        <taxon>Acidithiobacillus</taxon>
    </lineage>
</organism>
<protein>
    <recommendedName>
        <fullName evidence="1">Ribulose bisphosphate carboxylase large chain 1</fullName>
        <shortName evidence="1">RuBisCO large subunit 1</shortName>
        <ecNumber evidence="1">4.1.1.39</ecNumber>
    </recommendedName>
</protein>
<keyword id="KW-0113">Calvin cycle</keyword>
<keyword id="KW-0120">Carbon dioxide fixation</keyword>
<keyword id="KW-0456">Lyase</keyword>
<keyword id="KW-0460">Magnesium</keyword>
<keyword id="KW-0479">Metal-binding</keyword>
<keyword id="KW-0503">Monooxygenase</keyword>
<keyword id="KW-0560">Oxidoreductase</keyword>
<gene>
    <name evidence="1" type="primary">cbbL1</name>
    <name evidence="1" type="synonym">rbcL1</name>
</gene>
<proteinExistence type="inferred from homology"/>
<evidence type="ECO:0000255" key="1">
    <source>
        <dbReference type="HAMAP-Rule" id="MF_01338"/>
    </source>
</evidence>
<evidence type="ECO:0000305" key="2"/>
<feature type="chain" id="PRO_0000062657" description="Ribulose bisphosphate carboxylase large chain 1">
    <location>
        <begin position="1"/>
        <end position="473"/>
    </location>
</feature>
<feature type="active site" description="Proton acceptor" evidence="1">
    <location>
        <position position="168"/>
    </location>
</feature>
<feature type="active site" description="Proton acceptor" evidence="1">
    <location>
        <position position="287"/>
    </location>
</feature>
<feature type="binding site" description="in homodimeric partner" evidence="1">
    <location>
        <position position="116"/>
    </location>
    <ligand>
        <name>substrate</name>
    </ligand>
</feature>
<feature type="binding site" evidence="1">
    <location>
        <position position="166"/>
    </location>
    <ligand>
        <name>substrate</name>
    </ligand>
</feature>
<feature type="binding site" evidence="1">
    <location>
        <position position="170"/>
    </location>
    <ligand>
        <name>substrate</name>
    </ligand>
</feature>
<feature type="binding site" description="via carbamate group" evidence="1">
    <location>
        <position position="194"/>
    </location>
    <ligand>
        <name>Mg(2+)</name>
        <dbReference type="ChEBI" id="CHEBI:18420"/>
    </ligand>
</feature>
<feature type="binding site" evidence="1">
    <location>
        <position position="196"/>
    </location>
    <ligand>
        <name>Mg(2+)</name>
        <dbReference type="ChEBI" id="CHEBI:18420"/>
    </ligand>
</feature>
<feature type="binding site" evidence="1">
    <location>
        <position position="197"/>
    </location>
    <ligand>
        <name>Mg(2+)</name>
        <dbReference type="ChEBI" id="CHEBI:18420"/>
    </ligand>
</feature>
<feature type="binding site" evidence="1">
    <location>
        <position position="288"/>
    </location>
    <ligand>
        <name>substrate</name>
    </ligand>
</feature>
<feature type="binding site" evidence="1">
    <location>
        <position position="320"/>
    </location>
    <ligand>
        <name>substrate</name>
    </ligand>
</feature>
<feature type="binding site" evidence="1">
    <location>
        <position position="372"/>
    </location>
    <ligand>
        <name>substrate</name>
    </ligand>
</feature>
<feature type="site" description="Transition state stabilizer" evidence="1">
    <location>
        <position position="327"/>
    </location>
</feature>
<feature type="modified residue" description="N6-carboxylysine" evidence="1">
    <location>
        <position position="194"/>
    </location>
</feature>